<comment type="function">
    <text evidence="3 6">Short-chain dehydrogenase/reductase; part of the gene cluster that mediates the biosynthesis of the meroterpenoids arthripenoids (PubMed:29797385). The pathway begins with the HR-PKS atnH that catalyzes two chain-extension steps to form a reduced triketide, which then primes the SAT domain in the NR-PKS atnG to initiate three more cycles of extension to give a linear hexaketide corresponding to the polyketide part of arthripenoids (PubMed:29797385). The FAD-dependent monooxygenase atnJ then performs an oxidative decarboxylation at C11 of the atnH/atnG product, via an electrophilic aromatic hydroxylation with concomitant ipso-decarboxylation (PubMed:29797385). The membrane-bound polyprenyl transferase atnF then introduces a farnesyl group before the FAD-dependent monooxygenase atnK functions as the first epoxidase on terminal C12'-C13' olefin, followed by a second epoxidation on C7'-C8' catalyzed by atnA (PubMed:29797385). The terpene cyclase/mutase atnI then initiates the sequential tricyclic ring formation through protonation of the terminal epoxide and catalyzes the regioselective and stereoselective 6/6/6-tricyclic ring formation (PubMed:29797385). The cytochrome P450 monooxygenase atnM is responsible for hydroxylating both C1' and C10' (Probable). The next steps may involve ketoreduction and acetyl transfer by the ketoreductase atnB and the acetyltransferase atnC, and lead to the production of arthripenoid B, the final biosynthetic product of the atn cluster (PubMed:29797385). The hydroquinone moiety in arthripenoid B is prone to undergo spontaneous oxidation to afford a benzoquinone compound, a key intermediate for generating structure diversity (Probable). For instance, addition of a cysteine followed by ring contraction gives arthripenoid A, tautomerization gives the main product arthripenoid C, addition of a molecular of water or amine affords arthripenoid D or E, respectively, and loss of one water forms arthripenoid F (Probable).</text>
</comment>
<comment type="pathway">
    <text evidence="3">Secondary metabolite biosynthesis; terpenoid biosynthesis.</text>
</comment>
<comment type="disruption phenotype">
    <text evidence="3">Abolishes the production of arthripenoids but leads to the accumulation of a new compound that has a keto group at position C4.</text>
</comment>
<comment type="similarity">
    <text evidence="5">Belongs to the short-chain dehydrogenases/reductases (SDR) family.</text>
</comment>
<feature type="chain" id="PRO_0000452561" description="Short-chain dehydrogenase/reductase atnB">
    <location>
        <begin position="1"/>
        <end position="266"/>
    </location>
</feature>
<feature type="active site" description="Proton donor" evidence="2">
    <location>
        <position position="147"/>
    </location>
</feature>
<feature type="active site" description="Proton donor" evidence="2">
    <location>
        <position position="166"/>
    </location>
</feature>
<feature type="active site" description="Lowers pKa of active site Tyr" evidence="2">
    <location>
        <position position="170"/>
    </location>
</feature>
<feature type="binding site" evidence="1">
    <location>
        <position position="13"/>
    </location>
    <ligand>
        <name>NADP(+)</name>
        <dbReference type="ChEBI" id="CHEBI:58349"/>
    </ligand>
</feature>
<feature type="binding site" evidence="1">
    <location>
        <position position="57"/>
    </location>
    <ligand>
        <name>NADP(+)</name>
        <dbReference type="ChEBI" id="CHEBI:58349"/>
    </ligand>
</feature>
<feature type="binding site" evidence="2">
    <location>
        <position position="85"/>
    </location>
    <ligand>
        <name>NADP(+)</name>
        <dbReference type="ChEBI" id="CHEBI:58349"/>
    </ligand>
</feature>
<feature type="binding site" evidence="2">
    <location>
        <position position="166"/>
    </location>
    <ligand>
        <name>NADP(+)</name>
        <dbReference type="ChEBI" id="CHEBI:58349"/>
    </ligand>
</feature>
<feature type="binding site" evidence="2">
    <location>
        <position position="170"/>
    </location>
    <ligand>
        <name>NADP(+)</name>
        <dbReference type="ChEBI" id="CHEBI:58349"/>
    </ligand>
</feature>
<feature type="binding site" evidence="2">
    <location>
        <position position="199"/>
    </location>
    <ligand>
        <name>NADP(+)</name>
        <dbReference type="ChEBI" id="CHEBI:58349"/>
    </ligand>
</feature>
<feature type="binding site" evidence="1">
    <location>
        <position position="201"/>
    </location>
    <ligand>
        <name>NADP(+)</name>
        <dbReference type="ChEBI" id="CHEBI:58349"/>
    </ligand>
</feature>
<evidence type="ECO:0000250" key="1">
    <source>
        <dbReference type="UniProtKB" id="L0E2Z4"/>
    </source>
</evidence>
<evidence type="ECO:0000250" key="2">
    <source>
        <dbReference type="UniProtKB" id="O93868"/>
    </source>
</evidence>
<evidence type="ECO:0000269" key="3">
    <source>
    </source>
</evidence>
<evidence type="ECO:0000303" key="4">
    <source>
    </source>
</evidence>
<evidence type="ECO:0000305" key="5"/>
<evidence type="ECO:0000305" key="6">
    <source>
    </source>
</evidence>
<reference key="1">
    <citation type="journal article" date="2018" name="Angew. Chem. Int. Ed.">
        <title>Genome mining and comparative biosynthesis of meroterpenoids from two phylogenetically distinct fungi.</title>
        <authorList>
            <person name="Zhang X."/>
            <person name="Wang T.T."/>
            <person name="Xu Q.L."/>
            <person name="Xiong Y."/>
            <person name="Zhang L."/>
            <person name="Han H."/>
            <person name="Xu K."/>
            <person name="Guo W.J."/>
            <person name="Xu Q."/>
            <person name="Tan R.X."/>
            <person name="Ge H.M."/>
        </authorList>
    </citation>
    <scope>NUCLEOTIDE SEQUENCE [MRNA]</scope>
    <scope>DISRUPTION PHENOTYPE</scope>
    <scope>FUNCTION</scope>
    <scope>PATHWAY</scope>
    <source>
        <strain>NF2194</strain>
    </source>
</reference>
<accession>A0A455LLX2</accession>
<protein>
    <recommendedName>
        <fullName evidence="4">Short-chain dehydrogenase/reductase atnB</fullName>
        <ecNumber evidence="6">1.1.1.-</ecNumber>
    </recommendedName>
    <alternativeName>
        <fullName evidence="4">Arthripenoid biosynthesis cluster protein B</fullName>
    </alternativeName>
</protein>
<dbReference type="EC" id="1.1.1.-" evidence="6"/>
<dbReference type="EMBL" id="MH183008">
    <property type="protein sequence ID" value="AYO60875.1"/>
    <property type="molecule type" value="mRNA"/>
</dbReference>
<dbReference type="SMR" id="A0A455LLX2"/>
<dbReference type="UniPathway" id="UPA00213"/>
<dbReference type="GO" id="GO:0016616">
    <property type="term" value="F:oxidoreductase activity, acting on the CH-OH group of donors, NAD or NADP as acceptor"/>
    <property type="evidence" value="ECO:0007669"/>
    <property type="project" value="TreeGrafter"/>
</dbReference>
<dbReference type="GO" id="GO:0016114">
    <property type="term" value="P:terpenoid biosynthetic process"/>
    <property type="evidence" value="ECO:0007669"/>
    <property type="project" value="UniProtKB-UniPathway"/>
</dbReference>
<dbReference type="CDD" id="cd05325">
    <property type="entry name" value="carb_red_sniffer_like_SDR_c"/>
    <property type="match status" value="1"/>
</dbReference>
<dbReference type="Gene3D" id="3.40.50.720">
    <property type="entry name" value="NAD(P)-binding Rossmann-like Domain"/>
    <property type="match status" value="1"/>
</dbReference>
<dbReference type="InterPro" id="IPR036291">
    <property type="entry name" value="NAD(P)-bd_dom_sf"/>
</dbReference>
<dbReference type="InterPro" id="IPR052184">
    <property type="entry name" value="SDR_enzymes"/>
</dbReference>
<dbReference type="InterPro" id="IPR002347">
    <property type="entry name" value="SDR_fam"/>
</dbReference>
<dbReference type="PANTHER" id="PTHR45458:SF3">
    <property type="entry name" value="CHAIN DEHYDROGENASE (ATSC), PUTATIVE-RELATED"/>
    <property type="match status" value="1"/>
</dbReference>
<dbReference type="PANTHER" id="PTHR45458">
    <property type="entry name" value="SHORT-CHAIN DEHYDROGENASE/REDUCTASE SDR"/>
    <property type="match status" value="1"/>
</dbReference>
<dbReference type="Pfam" id="PF00106">
    <property type="entry name" value="adh_short"/>
    <property type="match status" value="1"/>
</dbReference>
<dbReference type="PRINTS" id="PR00081">
    <property type="entry name" value="GDHRDH"/>
</dbReference>
<dbReference type="SUPFAM" id="SSF51735">
    <property type="entry name" value="NAD(P)-binding Rossmann-fold domains"/>
    <property type="match status" value="1"/>
</dbReference>
<name>ATNB_ARTSZ</name>
<sequence>MSSWAITGASRGIGFEFAKQLSADGSNQVFALIRSEPSAELAELSSGRENLHVIQADVTDAQGLSEAAAKVGELTGNKLDVFISNACHPGLDLRFHPTSAFLGKEKELKEEIDACMNVNLLGAINSINCFLPLIRNGELKKIIYITSPSGDAEFTRKCGVTVTVGYSITKAAMNLVMSKYAAELKGEGIKTLSLSPGWVDTDGTRDMAPTPEILEMALQVFQKFKPDLTGLMSVEESVRMQLNVINGLTVKQSGLALSHHGDYNWL</sequence>
<gene>
    <name evidence="4" type="primary">atnB</name>
</gene>
<proteinExistence type="evidence at transcript level"/>
<organism>
    <name type="scientific">Arthrinium sp</name>
    <dbReference type="NCBI Taxonomy" id="1756131"/>
    <lineage>
        <taxon>Eukaryota</taxon>
        <taxon>Fungi</taxon>
        <taxon>Dikarya</taxon>
        <taxon>Ascomycota</taxon>
        <taxon>Pezizomycotina</taxon>
        <taxon>Sordariomycetes</taxon>
        <taxon>Xylariomycetidae</taxon>
        <taxon>Amphisphaeriales</taxon>
        <taxon>Apiosporaceae</taxon>
        <taxon>Arthrinium</taxon>
    </lineage>
</organism>
<keyword id="KW-0521">NADP</keyword>
<keyword id="KW-0560">Oxidoreductase</keyword>